<sequence>MKQKSIEMLVQGASSLGITLEMFHVEHFQKFYSLLLEWNQKMNLTAITEEEEVVIKHFLDSLSVIKSGKIKGGEKVIDIGTGAGFPGIPLKIVFPEIGLTLLEASKKKVNFLNFLSQVLLFEGIEVIHGRAEELGKVERFREKFDIATARAVAPLNILLEYAVPFVRVGGHFIAMKGRDIEEVYQCKNALEELKCEIEDVIEVRLPFSDILHHLIVVKKVDVLPSKYPRREKAIRTKPL</sequence>
<proteinExistence type="inferred from homology"/>
<comment type="function">
    <text evidence="1">Specifically methylates the N7 position of a guanine in 16S rRNA.</text>
</comment>
<comment type="subcellular location">
    <subcellularLocation>
        <location evidence="1">Cytoplasm</location>
    </subcellularLocation>
</comment>
<comment type="similarity">
    <text evidence="1">Belongs to the methyltransferase superfamily. RNA methyltransferase RsmG family.</text>
</comment>
<name>RSMG_CALS4</name>
<keyword id="KW-0963">Cytoplasm</keyword>
<keyword id="KW-0489">Methyltransferase</keyword>
<keyword id="KW-1185">Reference proteome</keyword>
<keyword id="KW-0698">rRNA processing</keyword>
<keyword id="KW-0949">S-adenosyl-L-methionine</keyword>
<keyword id="KW-0808">Transferase</keyword>
<dbReference type="EC" id="2.1.1.-" evidence="1"/>
<dbReference type="EMBL" id="AE008691">
    <property type="protein sequence ID" value="AAM25898.1"/>
    <property type="molecule type" value="Genomic_DNA"/>
</dbReference>
<dbReference type="RefSeq" id="WP_009610967.1">
    <property type="nucleotide sequence ID" value="NC_003869.1"/>
</dbReference>
<dbReference type="SMR" id="Q8R6L0"/>
<dbReference type="STRING" id="273068.TTE2794"/>
<dbReference type="KEGG" id="tte:TTE2794"/>
<dbReference type="eggNOG" id="COG0357">
    <property type="taxonomic scope" value="Bacteria"/>
</dbReference>
<dbReference type="HOGENOM" id="CLU_065341_0_0_9"/>
<dbReference type="OrthoDB" id="9808773at2"/>
<dbReference type="Proteomes" id="UP000000555">
    <property type="component" value="Chromosome"/>
</dbReference>
<dbReference type="GO" id="GO:0005829">
    <property type="term" value="C:cytosol"/>
    <property type="evidence" value="ECO:0007669"/>
    <property type="project" value="TreeGrafter"/>
</dbReference>
<dbReference type="GO" id="GO:0070043">
    <property type="term" value="F:rRNA (guanine-N7-)-methyltransferase activity"/>
    <property type="evidence" value="ECO:0007669"/>
    <property type="project" value="UniProtKB-UniRule"/>
</dbReference>
<dbReference type="CDD" id="cd02440">
    <property type="entry name" value="AdoMet_MTases"/>
    <property type="match status" value="1"/>
</dbReference>
<dbReference type="FunFam" id="3.40.50.150:FF:000041">
    <property type="entry name" value="Ribosomal RNA small subunit methyltransferase G"/>
    <property type="match status" value="1"/>
</dbReference>
<dbReference type="Gene3D" id="3.40.50.150">
    <property type="entry name" value="Vaccinia Virus protein VP39"/>
    <property type="match status" value="1"/>
</dbReference>
<dbReference type="HAMAP" id="MF_00074">
    <property type="entry name" value="16SrRNA_methyltr_G"/>
    <property type="match status" value="1"/>
</dbReference>
<dbReference type="InterPro" id="IPR003682">
    <property type="entry name" value="rRNA_ssu_MeTfrase_G"/>
</dbReference>
<dbReference type="InterPro" id="IPR029063">
    <property type="entry name" value="SAM-dependent_MTases_sf"/>
</dbReference>
<dbReference type="NCBIfam" id="TIGR00138">
    <property type="entry name" value="rsmG_gidB"/>
    <property type="match status" value="1"/>
</dbReference>
<dbReference type="PANTHER" id="PTHR31760">
    <property type="entry name" value="S-ADENOSYL-L-METHIONINE-DEPENDENT METHYLTRANSFERASES SUPERFAMILY PROTEIN"/>
    <property type="match status" value="1"/>
</dbReference>
<dbReference type="PANTHER" id="PTHR31760:SF0">
    <property type="entry name" value="S-ADENOSYL-L-METHIONINE-DEPENDENT METHYLTRANSFERASES SUPERFAMILY PROTEIN"/>
    <property type="match status" value="1"/>
</dbReference>
<dbReference type="Pfam" id="PF02527">
    <property type="entry name" value="GidB"/>
    <property type="match status" value="1"/>
</dbReference>
<dbReference type="PIRSF" id="PIRSF003078">
    <property type="entry name" value="GidB"/>
    <property type="match status" value="1"/>
</dbReference>
<dbReference type="SUPFAM" id="SSF53335">
    <property type="entry name" value="S-adenosyl-L-methionine-dependent methyltransferases"/>
    <property type="match status" value="1"/>
</dbReference>
<evidence type="ECO:0000255" key="1">
    <source>
        <dbReference type="HAMAP-Rule" id="MF_00074"/>
    </source>
</evidence>
<accession>Q8R6L0</accession>
<reference key="1">
    <citation type="journal article" date="2002" name="Genome Res.">
        <title>A complete sequence of the T. tengcongensis genome.</title>
        <authorList>
            <person name="Bao Q."/>
            <person name="Tian Y."/>
            <person name="Li W."/>
            <person name="Xu Z."/>
            <person name="Xuan Z."/>
            <person name="Hu S."/>
            <person name="Dong W."/>
            <person name="Yang J."/>
            <person name="Chen Y."/>
            <person name="Xue Y."/>
            <person name="Xu Y."/>
            <person name="Lai X."/>
            <person name="Huang L."/>
            <person name="Dong X."/>
            <person name="Ma Y."/>
            <person name="Ling L."/>
            <person name="Tan H."/>
            <person name="Chen R."/>
            <person name="Wang J."/>
            <person name="Yu J."/>
            <person name="Yang H."/>
        </authorList>
    </citation>
    <scope>NUCLEOTIDE SEQUENCE [LARGE SCALE GENOMIC DNA]</scope>
    <source>
        <strain>DSM 15242 / JCM 11007 / NBRC 100824 / MB4</strain>
    </source>
</reference>
<protein>
    <recommendedName>
        <fullName evidence="1">Ribosomal RNA small subunit methyltransferase G</fullName>
        <ecNumber evidence="1">2.1.1.-</ecNumber>
    </recommendedName>
    <alternativeName>
        <fullName evidence="1">16S rRNA 7-methylguanosine methyltransferase</fullName>
        <shortName evidence="1">16S rRNA m7G methyltransferase</shortName>
    </alternativeName>
</protein>
<organism>
    <name type="scientific">Caldanaerobacter subterraneus subsp. tengcongensis (strain DSM 15242 / JCM 11007 / NBRC 100824 / MB4)</name>
    <name type="common">Thermoanaerobacter tengcongensis</name>
    <dbReference type="NCBI Taxonomy" id="273068"/>
    <lineage>
        <taxon>Bacteria</taxon>
        <taxon>Bacillati</taxon>
        <taxon>Bacillota</taxon>
        <taxon>Clostridia</taxon>
        <taxon>Thermoanaerobacterales</taxon>
        <taxon>Thermoanaerobacteraceae</taxon>
        <taxon>Caldanaerobacter</taxon>
    </lineage>
</organism>
<gene>
    <name evidence="1" type="primary">rsmG</name>
    <name type="ordered locus">TTE2794</name>
</gene>
<feature type="chain" id="PRO_0000184355" description="Ribosomal RNA small subunit methyltransferase G">
    <location>
        <begin position="1"/>
        <end position="239"/>
    </location>
</feature>
<feature type="binding site" evidence="1">
    <location>
        <position position="80"/>
    </location>
    <ligand>
        <name>S-adenosyl-L-methionine</name>
        <dbReference type="ChEBI" id="CHEBI:59789"/>
    </ligand>
</feature>
<feature type="binding site" evidence="1">
    <location>
        <position position="85"/>
    </location>
    <ligand>
        <name>S-adenosyl-L-methionine</name>
        <dbReference type="ChEBI" id="CHEBI:59789"/>
    </ligand>
</feature>
<feature type="binding site" evidence="1">
    <location>
        <begin position="103"/>
        <end position="105"/>
    </location>
    <ligand>
        <name>S-adenosyl-L-methionine</name>
        <dbReference type="ChEBI" id="CHEBI:59789"/>
    </ligand>
</feature>
<feature type="binding site" evidence="1">
    <location>
        <begin position="131"/>
        <end position="132"/>
    </location>
    <ligand>
        <name>S-adenosyl-L-methionine</name>
        <dbReference type="ChEBI" id="CHEBI:59789"/>
    </ligand>
</feature>
<feature type="binding site" evidence="1">
    <location>
        <position position="150"/>
    </location>
    <ligand>
        <name>S-adenosyl-L-methionine</name>
        <dbReference type="ChEBI" id="CHEBI:59789"/>
    </ligand>
</feature>